<protein>
    <recommendedName>
        <fullName evidence="7">Mannose-specific lectin 1</fullName>
    </recommendedName>
    <alternativeName>
        <fullName evidence="7">Agglutinin</fullName>
    </alternativeName>
    <component>
        <recommendedName>
            <fullName evidence="7">Mannose-specific lectin 1 chain 1</fullName>
        </recommendedName>
    </component>
    <component>
        <recommendedName>
            <fullName evidence="7">Mannose-specific lectin 1 chain 2</fullName>
        </recommendedName>
    </component>
</protein>
<accession>Q39487</accession>
<sequence length="267" mass="29317">MAKLLLFLLPAILGLLVPPRSWSAVALGTNYLLSGQTLETEGHLKNGDFDLVMQDDCNLVLYNGNWQSNTANKGRDCKLTLTDHGELVINNGDGSTVWRSGAQSVKGDYAAVVHPEGRLVVFSPSVFKIDPSVPGLNSLRFRNIPFTNNLLFSGQVLYGDGRLTAKNHQLVMQGDCNLVLYGGKYGWQSNTHGNGEHCFLRLNHKGELIIEDDDFKTIWSSSYSSKQGDYVLILRDDGVAVIYGPAIWETSPQAKEKMIGMVTAGKL</sequence>
<dbReference type="EMBL" id="D16173">
    <property type="protein sequence ID" value="BAA03722.1"/>
    <property type="status" value="ALT_FRAME"/>
    <property type="molecule type" value="mRNA"/>
</dbReference>
<dbReference type="PDB" id="5J76">
    <property type="method" value="X-ray"/>
    <property type="resolution" value="2.10 A"/>
    <property type="chains" value="A=27-135, B=143-253"/>
</dbReference>
<dbReference type="PDB" id="5T1X">
    <property type="method" value="X-ray"/>
    <property type="resolution" value="1.70 A"/>
    <property type="chains" value="B/D/F/H=143-251"/>
</dbReference>
<dbReference type="PDB" id="5T20">
    <property type="method" value="X-ray"/>
    <property type="resolution" value="1.91 A"/>
    <property type="chains" value="B/D/F/H/J/L/N/P=143-251"/>
</dbReference>
<dbReference type="PDBsum" id="5J76"/>
<dbReference type="PDBsum" id="5T1X"/>
<dbReference type="PDBsum" id="5T20"/>
<dbReference type="SMR" id="Q39487"/>
<dbReference type="UniLectin" id="Q39487"/>
<dbReference type="GO" id="GO:0005576">
    <property type="term" value="C:extracellular region"/>
    <property type="evidence" value="ECO:0007669"/>
    <property type="project" value="UniProtKB-SubCell"/>
</dbReference>
<dbReference type="GO" id="GO:0005537">
    <property type="term" value="F:D-mannose binding"/>
    <property type="evidence" value="ECO:0007669"/>
    <property type="project" value="UniProtKB-KW"/>
</dbReference>
<dbReference type="GO" id="GO:0051707">
    <property type="term" value="P:response to other organism"/>
    <property type="evidence" value="ECO:0007669"/>
    <property type="project" value="UniProtKB-ARBA"/>
</dbReference>
<dbReference type="CDD" id="cd00028">
    <property type="entry name" value="B_lectin"/>
    <property type="match status" value="2"/>
</dbReference>
<dbReference type="Gene3D" id="2.90.10.10">
    <property type="entry name" value="Bulb-type lectin domain"/>
    <property type="match status" value="2"/>
</dbReference>
<dbReference type="InterPro" id="IPR001480">
    <property type="entry name" value="Bulb-type_lectin_dom"/>
</dbReference>
<dbReference type="InterPro" id="IPR036426">
    <property type="entry name" value="Bulb-type_lectin_dom_sf"/>
</dbReference>
<dbReference type="SMART" id="SM00108">
    <property type="entry name" value="B_lectin"/>
    <property type="match status" value="2"/>
</dbReference>
<dbReference type="SUPFAM" id="SSF51110">
    <property type="entry name" value="alpha-D-mannose-specific plant lectins"/>
    <property type="match status" value="2"/>
</dbReference>
<dbReference type="PROSITE" id="PS50927">
    <property type="entry name" value="BULB_LECTIN"/>
    <property type="match status" value="2"/>
</dbReference>
<evidence type="ECO:0000250" key="1">
    <source>
        <dbReference type="UniProtKB" id="A5HMM7"/>
    </source>
</evidence>
<evidence type="ECO:0000250" key="2">
    <source>
        <dbReference type="UniProtKB" id="R9RL27"/>
    </source>
</evidence>
<evidence type="ECO:0000255" key="3">
    <source>
        <dbReference type="PROSITE-ProRule" id="PRU00038"/>
    </source>
</evidence>
<evidence type="ECO:0000269" key="4">
    <source>
    </source>
</evidence>
<evidence type="ECO:0000269" key="5">
    <source>
    </source>
</evidence>
<evidence type="ECO:0000269" key="6">
    <source>
    </source>
</evidence>
<evidence type="ECO:0000305" key="7"/>
<evidence type="ECO:0000305" key="8">
    <source>
    </source>
</evidence>
<evidence type="ECO:0007744" key="9">
    <source>
        <dbReference type="PDB" id="5J76"/>
    </source>
</evidence>
<evidence type="ECO:0007744" key="10">
    <source>
        <dbReference type="PDB" id="5T20"/>
    </source>
</evidence>
<evidence type="ECO:0007829" key="11">
    <source>
        <dbReference type="PDB" id="5J76"/>
    </source>
</evidence>
<reference key="1">
    <citation type="journal article" date="1993" name="Jpn. J. Genet.">
        <title>cDNAs encoding for storage proteins in the tubers of taro (Colocasia esculenta Schott).</title>
        <authorList>
            <person name="Hirai M."/>
            <person name="Nakamura K."/>
            <person name="Imai T."/>
            <person name="Sato T."/>
        </authorList>
    </citation>
    <scope>NUCLEOTIDE SEQUENCE [MRNA]</scope>
    <scope>PROTEIN SEQUENCE OF 27-36 AND 143-152</scope>
    <source>
        <tissue>Tuber</tissue>
    </source>
</reference>
<reference key="2">
    <citation type="journal article" date="2016" name="Int. J. Biol. Macromol.">
        <title>Structural analysis of beta-prism lectin from Colocasia esculenta (L.) S chott.</title>
        <authorList>
            <person name="Vajravijayan S."/>
            <person name="Pletnev S."/>
            <person name="Pletnev V.Z."/>
            <person name="Nandhagopal N."/>
            <person name="Gunasekaran K."/>
        </authorList>
    </citation>
    <scope>X-RAY CRYSTALLOGRAPHY (2.10 ANGSTROMS) OF 27-135 AND 143-253</scope>
    <scope>DISULFIDE BONDS</scope>
</reference>
<reference key="3">
    <citation type="journal article" date="2017" name="Glycobiology">
        <title>High-resolution crystal structures of Colocasia esculenta tarin lectin.</title>
        <authorList>
            <person name="Pereira P.R."/>
            <person name="Meagher J.L."/>
            <person name="Winter H.C."/>
            <person name="Goldstein I.J."/>
            <person name="Paschoalin V.M."/>
            <person name="Silva J.T."/>
            <person name="Stuckey J.A."/>
        </authorList>
    </citation>
    <scope>X-RAY CRYSTALLOGRAPHY (1.70 ANGSTROMS) OF 143-251 IN COMPLEX WITH BETA-D-MANNOSE</scope>
    <scope>DISULFIDE BONDS</scope>
    <scope>FUNCTION</scope>
    <scope>SUBUNIT</scope>
</reference>
<keyword id="KW-0002">3D-structure</keyword>
<keyword id="KW-0903">Direct protein sequencing</keyword>
<keyword id="KW-1015">Disulfide bond</keyword>
<keyword id="KW-0348">Hemagglutinin</keyword>
<keyword id="KW-0430">Lectin</keyword>
<keyword id="KW-0465">Mannose-binding</keyword>
<keyword id="KW-0677">Repeat</keyword>
<keyword id="KW-0964">Secreted</keyword>
<keyword id="KW-0732">Signal</keyword>
<feature type="signal peptide" evidence="6">
    <location>
        <begin position="1"/>
        <end position="26"/>
    </location>
</feature>
<feature type="chain" id="PRO_0000450777" description="Mannose-specific lectin 1 chain 1">
    <location>
        <begin position="27"/>
        <end position="143"/>
    </location>
</feature>
<feature type="chain" id="PRO_0000450778" description="Mannose-specific lectin 1 chain 2">
    <location>
        <begin position="144"/>
        <end position="267"/>
    </location>
</feature>
<feature type="domain" description="Bulb-type lectin 1" evidence="3">
    <location>
        <begin position="29"/>
        <end position="134"/>
    </location>
</feature>
<feature type="domain" description="Bulb-type lectin 2" evidence="3">
    <location>
        <begin position="148"/>
        <end position="255"/>
    </location>
</feature>
<feature type="short sequence motif" description="Carbohydrate-binding motif 1" evidence="8">
    <location>
        <begin position="54"/>
        <end position="62"/>
    </location>
</feature>
<feature type="short sequence motif" description="Carbohydrate-binding motif 2" evidence="8">
    <location>
        <begin position="173"/>
        <end position="181"/>
    </location>
</feature>
<feature type="binding site" evidence="1">
    <location>
        <begin position="54"/>
        <end position="58"/>
    </location>
    <ligand>
        <name>beta-D-mannose</name>
        <dbReference type="ChEBI" id="CHEBI:28563"/>
    </ligand>
</feature>
<feature type="binding site" evidence="1">
    <location>
        <position position="62"/>
    </location>
    <ligand>
        <name>beta-D-mannose</name>
        <dbReference type="ChEBI" id="CHEBI:28563"/>
    </ligand>
</feature>
<feature type="binding site" evidence="2">
    <location>
        <position position="66"/>
    </location>
    <ligand>
        <name>beta-D-mannose</name>
        <dbReference type="ChEBI" id="CHEBI:28563"/>
    </ligand>
</feature>
<feature type="binding site" evidence="1">
    <location>
        <position position="67"/>
    </location>
    <ligand>
        <name>beta-D-mannose</name>
        <dbReference type="ChEBI" id="CHEBI:28563"/>
    </ligand>
</feature>
<feature type="binding site" evidence="5 10">
    <location>
        <begin position="173"/>
        <end position="177"/>
    </location>
    <ligand>
        <name>beta-D-mannose</name>
        <dbReference type="ChEBI" id="CHEBI:28563"/>
    </ligand>
</feature>
<feature type="binding site" evidence="5 10">
    <location>
        <position position="181"/>
    </location>
    <ligand>
        <name>beta-D-mannose</name>
        <dbReference type="ChEBI" id="CHEBI:28563"/>
    </ligand>
</feature>
<feature type="binding site" evidence="5 10">
    <location>
        <begin position="185"/>
        <end position="188"/>
    </location>
    <ligand>
        <name>beta-D-mannose</name>
        <dbReference type="ChEBI" id="CHEBI:28563"/>
    </ligand>
</feature>
<feature type="disulfide bond" evidence="3 4 9">
    <location>
        <begin position="57"/>
        <end position="77"/>
    </location>
</feature>
<feature type="disulfide bond" evidence="3 4 9">
    <location>
        <begin position="176"/>
        <end position="198"/>
    </location>
</feature>
<feature type="strand" evidence="11">
    <location>
        <begin position="29"/>
        <end position="33"/>
    </location>
</feature>
<feature type="strand" evidence="11">
    <location>
        <begin position="43"/>
        <end position="46"/>
    </location>
</feature>
<feature type="strand" evidence="11">
    <location>
        <begin position="49"/>
        <end position="53"/>
    </location>
</feature>
<feature type="strand" evidence="11">
    <location>
        <begin position="59"/>
        <end position="62"/>
    </location>
</feature>
<feature type="turn" evidence="11">
    <location>
        <begin position="63"/>
        <end position="65"/>
    </location>
</feature>
<feature type="strand" evidence="11">
    <location>
        <begin position="78"/>
        <end position="81"/>
    </location>
</feature>
<feature type="strand" evidence="11">
    <location>
        <begin position="87"/>
        <end position="90"/>
    </location>
</feature>
<feature type="strand" evidence="11">
    <location>
        <begin position="96"/>
        <end position="99"/>
    </location>
</feature>
<feature type="strand" evidence="11">
    <location>
        <begin position="105"/>
        <end position="107"/>
    </location>
</feature>
<feature type="strand" evidence="11">
    <location>
        <begin position="110"/>
        <end position="114"/>
    </location>
</feature>
<feature type="turn" evidence="11">
    <location>
        <begin position="115"/>
        <end position="117"/>
    </location>
</feature>
<feature type="strand" evidence="11">
    <location>
        <begin position="118"/>
        <end position="122"/>
    </location>
</feature>
<feature type="strand" evidence="11">
    <location>
        <begin position="124"/>
        <end position="129"/>
    </location>
</feature>
<feature type="strand" evidence="11">
    <location>
        <begin position="150"/>
        <end position="152"/>
    </location>
</feature>
<feature type="strand" evidence="11">
    <location>
        <begin position="156"/>
        <end position="158"/>
    </location>
</feature>
<feature type="strand" evidence="11">
    <location>
        <begin position="161"/>
        <end position="165"/>
    </location>
</feature>
<feature type="strand" evidence="11">
    <location>
        <begin position="168"/>
        <end position="172"/>
    </location>
</feature>
<feature type="strand" evidence="11">
    <location>
        <begin position="178"/>
        <end position="185"/>
    </location>
</feature>
<feature type="strand" evidence="11">
    <location>
        <begin position="199"/>
        <end position="202"/>
    </location>
</feature>
<feature type="strand" evidence="11">
    <location>
        <begin position="208"/>
        <end position="211"/>
    </location>
</feature>
<feature type="strand" evidence="11">
    <location>
        <begin position="217"/>
        <end position="220"/>
    </location>
</feature>
<feature type="strand" evidence="11">
    <location>
        <begin position="226"/>
        <end position="228"/>
    </location>
</feature>
<feature type="strand" evidence="11">
    <location>
        <begin position="231"/>
        <end position="234"/>
    </location>
</feature>
<feature type="strand" evidence="11">
    <location>
        <begin position="240"/>
        <end position="243"/>
    </location>
</feature>
<feature type="strand" evidence="11">
    <location>
        <begin position="246"/>
        <end position="249"/>
    </location>
</feature>
<comment type="function">
    <text evidence="2 5">Mannose-specific lectin (PubMed:27558840). Shows agglutinating activity towards erythrocytes from rabbit (By similarity).</text>
</comment>
<comment type="subunit">
    <text evidence="5">Forms heterotetramer of 2 chains 1 and 2 chains 2 arranged as a dimer of chain 1 and chain 2 heterodimers.</text>
</comment>
<comment type="subcellular location">
    <subcellularLocation>
        <location evidence="7">Secreted</location>
    </subcellularLocation>
</comment>
<comment type="sequence caution" evidence="7">
    <conflict type="frameshift">
        <sequence resource="EMBL-CDS" id="BAA03722"/>
    </conflict>
</comment>
<organism>
    <name type="scientific">Colocasia esculenta</name>
    <name type="common">Wild taro</name>
    <name type="synonym">Arum esculentum</name>
    <dbReference type="NCBI Taxonomy" id="4460"/>
    <lineage>
        <taxon>Eukaryota</taxon>
        <taxon>Viridiplantae</taxon>
        <taxon>Streptophyta</taxon>
        <taxon>Embryophyta</taxon>
        <taxon>Tracheophyta</taxon>
        <taxon>Spermatophyta</taxon>
        <taxon>Magnoliopsida</taxon>
        <taxon>Liliopsida</taxon>
        <taxon>Araceae</taxon>
        <taxon>Aroideae</taxon>
        <taxon>Colocasieae</taxon>
        <taxon>Colocasia</taxon>
    </lineage>
</organism>
<proteinExistence type="evidence at protein level"/>
<name>LEC1_COLES</name>